<dbReference type="InParanoid" id="P80661"/>
<dbReference type="Proteomes" id="UP000006727">
    <property type="component" value="Unplaced"/>
</dbReference>
<dbReference type="GO" id="GO:0009535">
    <property type="term" value="C:chloroplast thylakoid membrane"/>
    <property type="evidence" value="ECO:0007669"/>
    <property type="project" value="UniProtKB-SubCell"/>
</dbReference>
<dbReference type="GO" id="GO:0009523">
    <property type="term" value="C:photosystem II"/>
    <property type="evidence" value="ECO:0007669"/>
    <property type="project" value="UniProtKB-KW"/>
</dbReference>
<dbReference type="GO" id="GO:0015979">
    <property type="term" value="P:photosynthesis"/>
    <property type="evidence" value="ECO:0007669"/>
    <property type="project" value="UniProtKB-KW"/>
</dbReference>
<reference key="1">
    <citation type="journal article" date="1997" name="Planta">
        <title>Cytokinin affects nuclear- and plastome-encoded energy-converting plastid enzymes.</title>
        <authorList>
            <person name="Kasten B."/>
            <person name="Buck F."/>
            <person name="Nuske J."/>
            <person name="Reski R."/>
        </authorList>
    </citation>
    <scope>PROTEIN SEQUENCE</scope>
    <source>
        <tissue>Protonema</tissue>
    </source>
</reference>
<feature type="chain" id="PRO_0000220270" description="Oxygen-evolving enhancer protein 2">
    <location>
        <begin position="1"/>
        <end position="22" status="greater than"/>
    </location>
</feature>
<feature type="non-consecutive residues" evidence="1">
    <location>
        <begin position="15"/>
        <end position="16"/>
    </location>
</feature>
<feature type="non-terminal residue">
    <location>
        <position position="22"/>
    </location>
</feature>
<accession>P80661</accession>
<name>PSBP2_PHYPA</name>
<evidence type="ECO:0000305" key="1"/>
<comment type="function">
    <text>May be involved in the regulation of photosystem II.</text>
</comment>
<comment type="subcellular location">
    <subcellularLocation>
        <location>Plastid</location>
        <location>Chloroplast thylakoid membrane</location>
    </subcellularLocation>
    <text>Associated with the photosystem II complex.</text>
</comment>
<comment type="induction">
    <text>By light.</text>
</comment>
<comment type="similarity">
    <text evidence="1">Belongs to the PsbP family.</text>
</comment>
<keyword id="KW-0150">Chloroplast</keyword>
<keyword id="KW-0903">Direct protein sequencing</keyword>
<keyword id="KW-0472">Membrane</keyword>
<keyword id="KW-0602">Photosynthesis</keyword>
<keyword id="KW-0604">Photosystem II</keyword>
<keyword id="KW-0934">Plastid</keyword>
<keyword id="KW-1185">Reference proteome</keyword>
<keyword id="KW-0793">Thylakoid</keyword>
<proteinExistence type="evidence at protein level"/>
<protein>
    <recommendedName>
        <fullName>Oxygen-evolving enhancer protein 2</fullName>
        <shortName>OEE2</shortName>
    </recommendedName>
    <alternativeName>
        <fullName>22 kDa subunit of oxygen evolving system of photosystem II</fullName>
    </alternativeName>
</protein>
<organism>
    <name type="scientific">Physcomitrium patens</name>
    <name type="common">Spreading-leaved earth moss</name>
    <name type="synonym">Physcomitrella patens</name>
    <dbReference type="NCBI Taxonomy" id="3218"/>
    <lineage>
        <taxon>Eukaryota</taxon>
        <taxon>Viridiplantae</taxon>
        <taxon>Streptophyta</taxon>
        <taxon>Embryophyta</taxon>
        <taxon>Bryophyta</taxon>
        <taxon>Bryophytina</taxon>
        <taxon>Bryopsida</taxon>
        <taxon>Funariidae</taxon>
        <taxon>Funariales</taxon>
        <taxon>Funariaceae</taxon>
        <taxon>Physcomitrium</taxon>
    </lineage>
</organism>
<sequence>KISTGFTPFAGNGFTXITEYGP</sequence>